<protein>
    <recommendedName>
        <fullName>Putative pectinesterase 11</fullName>
        <shortName>PE 11</shortName>
        <ecNumber>3.1.1.11</ecNumber>
    </recommendedName>
    <alternativeName>
        <fullName>Pectin methylesterase 11</fullName>
        <shortName>AtPME11</shortName>
    </alternativeName>
</protein>
<name>PME11_ARATH</name>
<keyword id="KW-0063">Aspartyl esterase</keyword>
<keyword id="KW-0325">Glycoprotein</keyword>
<keyword id="KW-0378">Hydrolase</keyword>
<keyword id="KW-0472">Membrane</keyword>
<keyword id="KW-1185">Reference proteome</keyword>
<keyword id="KW-0812">Transmembrane</keyword>
<keyword id="KW-1133">Transmembrane helix</keyword>
<organism>
    <name type="scientific">Arabidopsis thaliana</name>
    <name type="common">Mouse-ear cress</name>
    <dbReference type="NCBI Taxonomy" id="3702"/>
    <lineage>
        <taxon>Eukaryota</taxon>
        <taxon>Viridiplantae</taxon>
        <taxon>Streptophyta</taxon>
        <taxon>Embryophyta</taxon>
        <taxon>Tracheophyta</taxon>
        <taxon>Spermatophyta</taxon>
        <taxon>Magnoliopsida</taxon>
        <taxon>eudicotyledons</taxon>
        <taxon>Gunneridae</taxon>
        <taxon>Pentapetalae</taxon>
        <taxon>rosids</taxon>
        <taxon>malvids</taxon>
        <taxon>Brassicales</taxon>
        <taxon>Brassicaceae</taxon>
        <taxon>Camelineae</taxon>
        <taxon>Arabidopsis</taxon>
    </lineage>
</organism>
<proteinExistence type="inferred from homology"/>
<accession>Q9SIJ9</accession>
<evidence type="ECO:0000250" key="1"/>
<evidence type="ECO:0000255" key="2"/>
<evidence type="ECO:0000256" key="3">
    <source>
        <dbReference type="SAM" id="MobiDB-lite"/>
    </source>
</evidence>
<evidence type="ECO:0000305" key="4"/>
<feature type="chain" id="PRO_0000371668" description="Putative pectinesterase 11">
    <location>
        <begin position="1"/>
        <end position="352"/>
    </location>
</feature>
<feature type="transmembrane region" description="Helical" evidence="2">
    <location>
        <begin position="13"/>
        <end position="35"/>
    </location>
</feature>
<feature type="region of interest" description="Disordered" evidence="3">
    <location>
        <begin position="332"/>
        <end position="352"/>
    </location>
</feature>
<feature type="compositionally biased region" description="Polar residues" evidence="3">
    <location>
        <begin position="343"/>
        <end position="352"/>
    </location>
</feature>
<feature type="active site" description="Proton donor" evidence="1">
    <location>
        <position position="175"/>
    </location>
</feature>
<feature type="active site" description="Nucleophile" evidence="1">
    <location>
        <position position="196"/>
    </location>
</feature>
<feature type="binding site" evidence="1">
    <location>
        <position position="252"/>
    </location>
    <ligand>
        <name>substrate</name>
    </ligand>
</feature>
<feature type="binding site" evidence="1">
    <location>
        <position position="254"/>
    </location>
    <ligand>
        <name>substrate</name>
    </ligand>
</feature>
<feature type="site" description="Transition state stabilizer" evidence="1">
    <location>
        <position position="174"/>
    </location>
</feature>
<feature type="glycosylation site" description="N-linked (GlcNAc...) asparagine" evidence="2">
    <location>
        <position position="76"/>
    </location>
</feature>
<feature type="glycosylation site" description="N-linked (GlcNAc...) asparagine" evidence="2">
    <location>
        <position position="218"/>
    </location>
</feature>
<reference key="1">
    <citation type="journal article" date="1999" name="Nature">
        <title>Sequence and analysis of chromosome 2 of the plant Arabidopsis thaliana.</title>
        <authorList>
            <person name="Lin X."/>
            <person name="Kaul S."/>
            <person name="Rounsley S.D."/>
            <person name="Shea T.P."/>
            <person name="Benito M.-I."/>
            <person name="Town C.D."/>
            <person name="Fujii C.Y."/>
            <person name="Mason T.M."/>
            <person name="Bowman C.L."/>
            <person name="Barnstead M.E."/>
            <person name="Feldblyum T.V."/>
            <person name="Buell C.R."/>
            <person name="Ketchum K.A."/>
            <person name="Lee J.J."/>
            <person name="Ronning C.M."/>
            <person name="Koo H.L."/>
            <person name="Moffat K.S."/>
            <person name="Cronin L.A."/>
            <person name="Shen M."/>
            <person name="Pai G."/>
            <person name="Van Aken S."/>
            <person name="Umayam L."/>
            <person name="Tallon L.J."/>
            <person name="Gill J.E."/>
            <person name="Adams M.D."/>
            <person name="Carrera A.J."/>
            <person name="Creasy T.H."/>
            <person name="Goodman H.M."/>
            <person name="Somerville C.R."/>
            <person name="Copenhaver G.P."/>
            <person name="Preuss D."/>
            <person name="Nierman W.C."/>
            <person name="White O."/>
            <person name="Eisen J.A."/>
            <person name="Salzberg S.L."/>
            <person name="Fraser C.M."/>
            <person name="Venter J.C."/>
        </authorList>
    </citation>
    <scope>NUCLEOTIDE SEQUENCE [LARGE SCALE GENOMIC DNA]</scope>
    <source>
        <strain>cv. Columbia</strain>
    </source>
</reference>
<reference key="2">
    <citation type="journal article" date="2017" name="Plant J.">
        <title>Araport11: a complete reannotation of the Arabidopsis thaliana reference genome.</title>
        <authorList>
            <person name="Cheng C.Y."/>
            <person name="Krishnakumar V."/>
            <person name="Chan A.P."/>
            <person name="Thibaud-Nissen F."/>
            <person name="Schobel S."/>
            <person name="Town C.D."/>
        </authorList>
    </citation>
    <scope>GENOME REANNOTATION</scope>
    <source>
        <strain>cv. Columbia</strain>
    </source>
</reference>
<reference key="3">
    <citation type="journal article" date="2004" name="Carbohydr. Res.">
        <title>Pectin methylesterases: sequence-structural features and phylogenetic relationships.</title>
        <authorList>
            <person name="Markovic O."/>
            <person name="Janecek S."/>
        </authorList>
    </citation>
    <scope>GENE FAMILY</scope>
    <scope>NOMENCLATURE</scope>
</reference>
<dbReference type="EC" id="3.1.1.11"/>
<dbReference type="EMBL" id="AC007119">
    <property type="protein sequence ID" value="AAD23644.1"/>
    <property type="molecule type" value="Genomic_DNA"/>
</dbReference>
<dbReference type="EMBL" id="CP002685">
    <property type="protein sequence ID" value="AEC07202.1"/>
    <property type="molecule type" value="Genomic_DNA"/>
</dbReference>
<dbReference type="PIR" id="C84603">
    <property type="entry name" value="C84603"/>
</dbReference>
<dbReference type="SMR" id="Q9SIJ9"/>
<dbReference type="FunCoup" id="Q9SIJ9">
    <property type="interactions" value="144"/>
</dbReference>
<dbReference type="STRING" id="3702.Q9SIJ9"/>
<dbReference type="GlyCosmos" id="Q9SIJ9">
    <property type="glycosylation" value="2 sites, No reported glycans"/>
</dbReference>
<dbReference type="GlyGen" id="Q9SIJ9">
    <property type="glycosylation" value="2 sites"/>
</dbReference>
<dbReference type="PaxDb" id="3702-AT2G21610.1"/>
<dbReference type="EnsemblPlants" id="AT2G21610.1">
    <property type="protein sequence ID" value="AT2G21610.1"/>
    <property type="gene ID" value="AT2G21610"/>
</dbReference>
<dbReference type="GeneID" id="816699"/>
<dbReference type="Gramene" id="AT2G21610.1">
    <property type="protein sequence ID" value="AT2G21610.1"/>
    <property type="gene ID" value="AT2G21610"/>
</dbReference>
<dbReference type="KEGG" id="ath:AT2G21610"/>
<dbReference type="Araport" id="AT2G21610"/>
<dbReference type="TAIR" id="AT2G21610">
    <property type="gene designation" value="PE11"/>
</dbReference>
<dbReference type="eggNOG" id="ENOG502QSQ4">
    <property type="taxonomic scope" value="Eukaryota"/>
</dbReference>
<dbReference type="HOGENOM" id="CLU_012243_3_0_1"/>
<dbReference type="InParanoid" id="Q9SIJ9"/>
<dbReference type="PhylomeDB" id="Q9SIJ9"/>
<dbReference type="UniPathway" id="UPA00545">
    <property type="reaction ID" value="UER00823"/>
</dbReference>
<dbReference type="PRO" id="PR:Q9SIJ9"/>
<dbReference type="Proteomes" id="UP000006548">
    <property type="component" value="Chromosome 2"/>
</dbReference>
<dbReference type="ExpressionAtlas" id="Q9SIJ9">
    <property type="expression patterns" value="baseline and differential"/>
</dbReference>
<dbReference type="GO" id="GO:0016020">
    <property type="term" value="C:membrane"/>
    <property type="evidence" value="ECO:0007669"/>
    <property type="project" value="UniProtKB-SubCell"/>
</dbReference>
<dbReference type="GO" id="GO:0030599">
    <property type="term" value="F:pectinesterase activity"/>
    <property type="evidence" value="ECO:0007669"/>
    <property type="project" value="UniProtKB-EC"/>
</dbReference>
<dbReference type="GO" id="GO:0042545">
    <property type="term" value="P:cell wall modification"/>
    <property type="evidence" value="ECO:0007669"/>
    <property type="project" value="InterPro"/>
</dbReference>
<dbReference type="GO" id="GO:0045490">
    <property type="term" value="P:pectin catabolic process"/>
    <property type="evidence" value="ECO:0007669"/>
    <property type="project" value="UniProtKB-UniPathway"/>
</dbReference>
<dbReference type="FunFam" id="2.160.20.10:FF:000013">
    <property type="entry name" value="Pectinesterase"/>
    <property type="match status" value="1"/>
</dbReference>
<dbReference type="Gene3D" id="2.160.20.10">
    <property type="entry name" value="Single-stranded right-handed beta-helix, Pectin lyase-like"/>
    <property type="match status" value="1"/>
</dbReference>
<dbReference type="InterPro" id="IPR012334">
    <property type="entry name" value="Pectin_lyas_fold"/>
</dbReference>
<dbReference type="InterPro" id="IPR011050">
    <property type="entry name" value="Pectin_lyase_fold/virulence"/>
</dbReference>
<dbReference type="InterPro" id="IPR000070">
    <property type="entry name" value="Pectinesterase_cat"/>
</dbReference>
<dbReference type="PANTHER" id="PTHR31321">
    <property type="entry name" value="ACYL-COA THIOESTER HYDROLASE YBHC-RELATED"/>
    <property type="match status" value="1"/>
</dbReference>
<dbReference type="PANTHER" id="PTHR31321:SF72">
    <property type="entry name" value="PECTINESTERASE 11-RELATED"/>
    <property type="match status" value="1"/>
</dbReference>
<dbReference type="Pfam" id="PF01095">
    <property type="entry name" value="Pectinesterase"/>
    <property type="match status" value="1"/>
</dbReference>
<dbReference type="SUPFAM" id="SSF51126">
    <property type="entry name" value="Pectin lyase-like"/>
    <property type="match status" value="1"/>
</dbReference>
<sequence>MGLYKTKSKRSIANYHHIIIINIFILSSITSSSMASSSSPSSIDFSTAILIRVDQSGKGDFSKIQEAIESIPPNLNNSQLYFIWVKPGIYREKVVIPAEKPYITLSGTQASNTFLIWSDGEDILESPTLTIFASDFVCRFLTIQNKFGTAGRAVALRVAADKAAFYGCVITSYQDTLLDDNGNHYFKNCYIEGATDFICGSASSLYERCHLHSLSPNNGSITAQMRTSATEKSGFTFLGCKLTGSGSTFLGRPWGAYSRVVFAYSFFSNVVAPQGWNQWGDSTKENTVYYGEYKCYGPGADREQRVEWSKQLSDEEATVFLSKDFIGGKDWLRPAPSHFKNAPKQTQNKEIN</sequence>
<gene>
    <name type="primary">PME11</name>
    <name type="synonym">ARATH11</name>
    <name type="ordered locus">At2g21610</name>
    <name type="ORF">F2G1.12</name>
</gene>
<comment type="function">
    <text evidence="1">Acts in the modification of cell walls via demethylesterification of cell wall pectin.</text>
</comment>
<comment type="catalytic activity">
    <reaction>
        <text>[(1-&gt;4)-alpha-D-galacturonosyl methyl ester](n) + n H2O = [(1-&gt;4)-alpha-D-galacturonosyl](n) + n methanol + n H(+)</text>
        <dbReference type="Rhea" id="RHEA:22380"/>
        <dbReference type="Rhea" id="RHEA-COMP:14570"/>
        <dbReference type="Rhea" id="RHEA-COMP:14573"/>
        <dbReference type="ChEBI" id="CHEBI:15377"/>
        <dbReference type="ChEBI" id="CHEBI:15378"/>
        <dbReference type="ChEBI" id="CHEBI:17790"/>
        <dbReference type="ChEBI" id="CHEBI:140522"/>
        <dbReference type="ChEBI" id="CHEBI:140523"/>
        <dbReference type="EC" id="3.1.1.11"/>
    </reaction>
</comment>
<comment type="pathway">
    <text>Glycan metabolism; pectin degradation; 2-dehydro-3-deoxy-D-gluconate from pectin: step 1/5.</text>
</comment>
<comment type="subcellular location">
    <subcellularLocation>
        <location evidence="4">Membrane</location>
        <topology evidence="4">Single-pass membrane protein</topology>
    </subcellularLocation>
</comment>
<comment type="similarity">
    <text evidence="4">Belongs to the pectinesterase family.</text>
</comment>